<comment type="function">
    <text evidence="4 6 11">May only reduce GSH-thiol disulfides, but not protein disulfides (Probable). Participates probably to the maturation of iron-sulfur proteins and to the regulation of the redox state of the BOLA proteins (Probable). The GRXS16-BOLA1 heterodimer binds a labile, oxygen sensitive iron-sulfur cluster (PubMed:24714563). Able to cleave linearized DNA in vitro (PubMed:23690600).</text>
</comment>
<comment type="activity regulation">
    <text evidence="4">The formation of an intramolecular disulfide bond negatively regulates both the N-terminal endonuclease and the C-terminal glutaredoxin activities.</text>
</comment>
<comment type="subunit">
    <text evidence="4 5 6 7">[2Fe-2S]-bridged holo-homodimer (PubMed:23690600). Interacts in vitro with SUFE1, BOLA1, BOLA2 and BOLA4 (PubMed:24203231). Interacts in vivo only with SUFE1, BOLA1 and BOLA4 (PubMed:23690600, PubMed:24203231, PubMed:24714563). Interacts with SBP1 (PubMed:30824043).</text>
</comment>
<comment type="interaction">
    <interactant intactId="EBI-4424482">
        <id>Q8H7F6</id>
    </interactant>
    <interactant intactId="EBI-3133404">
        <id>Q9XFM0</id>
        <label>IAA28</label>
    </interactant>
    <organismsDiffer>false</organismsDiffer>
    <experiments>3</experiments>
</comment>
<comment type="interaction">
    <interactant intactId="EBI-4424482">
        <id>Q8H7F6</id>
    </interactant>
    <interactant intactId="EBI-4446992">
        <id>O81313</id>
        <label>IND</label>
    </interactant>
    <organismsDiffer>false</organismsDiffer>
    <experiments>4</experiments>
</comment>
<comment type="subcellular location">
    <subcellularLocation>
        <location evidence="4">Plastid</location>
        <location evidence="4">Chloroplast</location>
    </subcellularLocation>
</comment>
<comment type="domain">
    <text evidence="4">The N-terminal domain (NTD) (63-170) has an intrinsic Mg(2+)-dependent endonuclease activity in vitro (PubMed:23690600). The glutaredoxin (GRX) domain (194-293) alone is able to complement yeast grx5 cells in vitro, but not the full-length GRXS16 protein.</text>
</comment>
<comment type="similarity">
    <text evidence="11">Belongs to the glutaredoxin family. CGFS subfamily.</text>
</comment>
<protein>
    <recommendedName>
        <fullName evidence="9">Bifunctional monothiol glutaredoxin-S16, chloroplastic</fullName>
        <shortName evidence="9">AtGrxS16</shortName>
    </recommendedName>
    <alternativeName>
        <fullName evidence="10">Atypical GIY-YIG endonuclease</fullName>
        <ecNumber>3.1.-.-</ecNumber>
    </alternativeName>
    <alternativeName>
        <fullName evidence="8">CAX-interacting protein 2</fullName>
    </alternativeName>
    <alternativeName>
        <fullName evidence="8">CAXIP1-like protein</fullName>
    </alternativeName>
</protein>
<proteinExistence type="evidence at protein level"/>
<dbReference type="EC" id="3.1.-.-"/>
<dbReference type="EMBL" id="AY157989">
    <property type="protein sequence ID" value="AAO19648.1"/>
    <property type="molecule type" value="mRNA"/>
</dbReference>
<dbReference type="EMBL" id="AF083698">
    <property type="protein sequence ID" value="AAN60257.1"/>
    <property type="molecule type" value="mRNA"/>
</dbReference>
<dbReference type="EMBL" id="AC003028">
    <property type="protein sequence ID" value="AAC27175.1"/>
    <property type="molecule type" value="Genomic_DNA"/>
</dbReference>
<dbReference type="EMBL" id="CP002685">
    <property type="protein sequence ID" value="AEC09515.1"/>
    <property type="molecule type" value="Genomic_DNA"/>
</dbReference>
<dbReference type="EMBL" id="AK117441">
    <property type="protein sequence ID" value="BAC42106.1"/>
    <property type="molecule type" value="mRNA"/>
</dbReference>
<dbReference type="EMBL" id="BT004974">
    <property type="protein sequence ID" value="AAO50507.1"/>
    <property type="molecule type" value="mRNA"/>
</dbReference>
<dbReference type="EMBL" id="AY086273">
    <property type="protein sequence ID" value="AAM64346.1"/>
    <property type="molecule type" value="mRNA"/>
</dbReference>
<dbReference type="PIR" id="T01258">
    <property type="entry name" value="T01258"/>
</dbReference>
<dbReference type="RefSeq" id="NP_565885.1">
    <property type="nucleotide sequence ID" value="NM_129383.3"/>
</dbReference>
<dbReference type="PDB" id="2LWF">
    <property type="method" value="NMR"/>
    <property type="chains" value="A=63-170"/>
</dbReference>
<dbReference type="PDBsum" id="2LWF"/>
<dbReference type="BMRB" id="Q8H7F6"/>
<dbReference type="SMR" id="Q8H7F6"/>
<dbReference type="BioGRID" id="3749">
    <property type="interactions" value="14"/>
</dbReference>
<dbReference type="FunCoup" id="Q8H7F6">
    <property type="interactions" value="759"/>
</dbReference>
<dbReference type="IntAct" id="Q8H7F6">
    <property type="interactions" value="8"/>
</dbReference>
<dbReference type="STRING" id="3702.Q8H7F6"/>
<dbReference type="PaxDb" id="3702-AT2G38270.1"/>
<dbReference type="ProteomicsDB" id="222250"/>
<dbReference type="EnsemblPlants" id="AT2G38270.1">
    <property type="protein sequence ID" value="AT2G38270.1"/>
    <property type="gene ID" value="AT2G38270"/>
</dbReference>
<dbReference type="GeneID" id="818407"/>
<dbReference type="Gramene" id="AT2G38270.1">
    <property type="protein sequence ID" value="AT2G38270.1"/>
    <property type="gene ID" value="AT2G38270"/>
</dbReference>
<dbReference type="KEGG" id="ath:AT2G38270"/>
<dbReference type="Araport" id="AT2G38270"/>
<dbReference type="TAIR" id="AT2G38270">
    <property type="gene designation" value="CXIP2"/>
</dbReference>
<dbReference type="eggNOG" id="KOG0911">
    <property type="taxonomic scope" value="Eukaryota"/>
</dbReference>
<dbReference type="HOGENOM" id="CLU_070932_0_0_1"/>
<dbReference type="InParanoid" id="Q8H7F6"/>
<dbReference type="OMA" id="RNAPQCG"/>
<dbReference type="PhylomeDB" id="Q8H7F6"/>
<dbReference type="EvolutionaryTrace" id="Q8H7F6"/>
<dbReference type="PRO" id="PR:Q8H7F6"/>
<dbReference type="Proteomes" id="UP000006548">
    <property type="component" value="Chromosome 2"/>
</dbReference>
<dbReference type="ExpressionAtlas" id="Q8H7F6">
    <property type="expression patterns" value="baseline and differential"/>
</dbReference>
<dbReference type="GO" id="GO:0009507">
    <property type="term" value="C:chloroplast"/>
    <property type="evidence" value="ECO:0007005"/>
    <property type="project" value="TAIR"/>
</dbReference>
<dbReference type="GO" id="GO:0009570">
    <property type="term" value="C:chloroplast stroma"/>
    <property type="evidence" value="ECO:0007005"/>
    <property type="project" value="TAIR"/>
</dbReference>
<dbReference type="GO" id="GO:0051537">
    <property type="term" value="F:2 iron, 2 sulfur cluster binding"/>
    <property type="evidence" value="ECO:0007669"/>
    <property type="project" value="UniProtKB-KW"/>
</dbReference>
<dbReference type="GO" id="GO:0016787">
    <property type="term" value="F:hydrolase activity"/>
    <property type="evidence" value="ECO:0007669"/>
    <property type="project" value="UniProtKB-KW"/>
</dbReference>
<dbReference type="GO" id="GO:0046872">
    <property type="term" value="F:metal ion binding"/>
    <property type="evidence" value="ECO:0007669"/>
    <property type="project" value="UniProtKB-KW"/>
</dbReference>
<dbReference type="GO" id="GO:0006812">
    <property type="term" value="P:monoatomic cation transport"/>
    <property type="evidence" value="ECO:0000314"/>
    <property type="project" value="TAIR"/>
</dbReference>
<dbReference type="CDD" id="cd10457">
    <property type="entry name" value="GIY-YIG_AtGrxS16"/>
    <property type="match status" value="1"/>
</dbReference>
<dbReference type="CDD" id="cd03028">
    <property type="entry name" value="GRX_PICOT_like"/>
    <property type="match status" value="1"/>
</dbReference>
<dbReference type="FunFam" id="3.40.30.10:FF:000005">
    <property type="entry name" value="Glutaredoxin 5"/>
    <property type="match status" value="1"/>
</dbReference>
<dbReference type="Gene3D" id="3.40.30.10">
    <property type="entry name" value="Glutaredoxin"/>
    <property type="match status" value="1"/>
</dbReference>
<dbReference type="InterPro" id="IPR049620">
    <property type="entry name" value="GIY-YIG_AtGrxS16"/>
</dbReference>
<dbReference type="InterPro" id="IPR002109">
    <property type="entry name" value="Glutaredoxin"/>
</dbReference>
<dbReference type="InterPro" id="IPR033658">
    <property type="entry name" value="GRX_PICOT-like"/>
</dbReference>
<dbReference type="InterPro" id="IPR004480">
    <property type="entry name" value="Monothiol_GRX-rel"/>
</dbReference>
<dbReference type="InterPro" id="IPR036249">
    <property type="entry name" value="Thioredoxin-like_sf"/>
</dbReference>
<dbReference type="NCBIfam" id="TIGR00365">
    <property type="entry name" value="Grx4 family monothiol glutaredoxin"/>
    <property type="match status" value="1"/>
</dbReference>
<dbReference type="PANTHER" id="PTHR10293:SF45">
    <property type="entry name" value="BIFUNCTIONAL MONOTHIOL GLUTAREDOXIN-S16, CHLOROPLASTIC"/>
    <property type="match status" value="1"/>
</dbReference>
<dbReference type="PANTHER" id="PTHR10293">
    <property type="entry name" value="GLUTAREDOXIN FAMILY MEMBER"/>
    <property type="match status" value="1"/>
</dbReference>
<dbReference type="Pfam" id="PF00462">
    <property type="entry name" value="Glutaredoxin"/>
    <property type="match status" value="1"/>
</dbReference>
<dbReference type="SUPFAM" id="SSF52833">
    <property type="entry name" value="Thioredoxin-like"/>
    <property type="match status" value="1"/>
</dbReference>
<dbReference type="PROSITE" id="PS51354">
    <property type="entry name" value="GLUTAREDOXIN_2"/>
    <property type="match status" value="1"/>
</dbReference>
<sequence length="293" mass="32206">MAAITISSSLHASASPRVVRPHVSRNTPVITLYSRFTPSFSFPSLSFTLRDTAPSRRRSFFIASAVKSLTETELLPITEADSIPSASGVYAVYDKSDELQFVGISRNIAASVSAHLKSVPELCGSVKVGIVEEPDKAVLTQAWKLWIEEHIKVTGKVPPGNKSGNNTFVKQTPRKKSDIRLTPGRHVELTVPLEELIDRLVKESKVVAFIKGSRSAPQCGFSQRVVGILESQGVDYETVDVLDDEYNHGLRETLKNYSNWPTFPQIFVKGELVGGCDILTSMYENGELANILN</sequence>
<accession>Q8H7F6</accession>
<accession>O80451</accession>
<accession>Q8LD13</accession>
<reference key="1">
    <citation type="journal article" date="2003" name="J. Biol. Chem.">
        <title>Cloning and characterization of CXIP1 A novel PICOT domain-containing Arabidopsis protein that associates with CAX1.</title>
        <authorList>
            <person name="Cheng N.-H."/>
            <person name="Hirschi K.D."/>
        </authorList>
    </citation>
    <scope>NUCLEOTIDE SEQUENCE [MRNA]</scope>
</reference>
<reference key="2">
    <citation type="submission" date="1998-08" db="EMBL/GenBank/DDBJ databases">
        <title>Signal peptide selection derived cDNAs from Arabidopsis thaliana leaves and guard cells.</title>
        <authorList>
            <person name="Stracke R."/>
            <person name="Palme K."/>
        </authorList>
    </citation>
    <scope>NUCLEOTIDE SEQUENCE [LARGE SCALE MRNA]</scope>
</reference>
<reference key="3">
    <citation type="journal article" date="1999" name="Nature">
        <title>Sequence and analysis of chromosome 2 of the plant Arabidopsis thaliana.</title>
        <authorList>
            <person name="Lin X."/>
            <person name="Kaul S."/>
            <person name="Rounsley S.D."/>
            <person name="Shea T.P."/>
            <person name="Benito M.-I."/>
            <person name="Town C.D."/>
            <person name="Fujii C.Y."/>
            <person name="Mason T.M."/>
            <person name="Bowman C.L."/>
            <person name="Barnstead M.E."/>
            <person name="Feldblyum T.V."/>
            <person name="Buell C.R."/>
            <person name="Ketchum K.A."/>
            <person name="Lee J.J."/>
            <person name="Ronning C.M."/>
            <person name="Koo H.L."/>
            <person name="Moffat K.S."/>
            <person name="Cronin L.A."/>
            <person name="Shen M."/>
            <person name="Pai G."/>
            <person name="Van Aken S."/>
            <person name="Umayam L."/>
            <person name="Tallon L.J."/>
            <person name="Gill J.E."/>
            <person name="Adams M.D."/>
            <person name="Carrera A.J."/>
            <person name="Creasy T.H."/>
            <person name="Goodman H.M."/>
            <person name="Somerville C.R."/>
            <person name="Copenhaver G.P."/>
            <person name="Preuss D."/>
            <person name="Nierman W.C."/>
            <person name="White O."/>
            <person name="Eisen J.A."/>
            <person name="Salzberg S.L."/>
            <person name="Fraser C.M."/>
            <person name="Venter J.C."/>
        </authorList>
    </citation>
    <scope>NUCLEOTIDE SEQUENCE [LARGE SCALE GENOMIC DNA]</scope>
    <source>
        <strain>cv. Columbia</strain>
    </source>
</reference>
<reference key="4">
    <citation type="journal article" date="2017" name="Plant J.">
        <title>Araport11: a complete reannotation of the Arabidopsis thaliana reference genome.</title>
        <authorList>
            <person name="Cheng C.Y."/>
            <person name="Krishnakumar V."/>
            <person name="Chan A.P."/>
            <person name="Thibaud-Nissen F."/>
            <person name="Schobel S."/>
            <person name="Town C.D."/>
        </authorList>
    </citation>
    <scope>GENOME REANNOTATION</scope>
    <source>
        <strain>cv. Columbia</strain>
    </source>
</reference>
<reference key="5">
    <citation type="journal article" date="2002" name="Science">
        <title>Functional annotation of a full-length Arabidopsis cDNA collection.</title>
        <authorList>
            <person name="Seki M."/>
            <person name="Narusaka M."/>
            <person name="Kamiya A."/>
            <person name="Ishida J."/>
            <person name="Satou M."/>
            <person name="Sakurai T."/>
            <person name="Nakajima M."/>
            <person name="Enju A."/>
            <person name="Akiyama K."/>
            <person name="Oono Y."/>
            <person name="Muramatsu M."/>
            <person name="Hayashizaki Y."/>
            <person name="Kawai J."/>
            <person name="Carninci P."/>
            <person name="Itoh M."/>
            <person name="Ishii Y."/>
            <person name="Arakawa T."/>
            <person name="Shibata K."/>
            <person name="Shinagawa A."/>
            <person name="Shinozaki K."/>
        </authorList>
    </citation>
    <scope>NUCLEOTIDE SEQUENCE [LARGE SCALE MRNA]</scope>
    <source>
        <strain>cv. Columbia</strain>
    </source>
</reference>
<reference key="6">
    <citation type="journal article" date="2003" name="Science">
        <title>Empirical analysis of transcriptional activity in the Arabidopsis genome.</title>
        <authorList>
            <person name="Yamada K."/>
            <person name="Lim J."/>
            <person name="Dale J.M."/>
            <person name="Chen H."/>
            <person name="Shinn P."/>
            <person name="Palm C.J."/>
            <person name="Southwick A.M."/>
            <person name="Wu H.C."/>
            <person name="Kim C.J."/>
            <person name="Nguyen M."/>
            <person name="Pham P.K."/>
            <person name="Cheuk R.F."/>
            <person name="Karlin-Newmann G."/>
            <person name="Liu S.X."/>
            <person name="Lam B."/>
            <person name="Sakano H."/>
            <person name="Wu T."/>
            <person name="Yu G."/>
            <person name="Miranda M."/>
            <person name="Quach H.L."/>
            <person name="Tripp M."/>
            <person name="Chang C.H."/>
            <person name="Lee J.M."/>
            <person name="Toriumi M.J."/>
            <person name="Chan M.M."/>
            <person name="Tang C.C."/>
            <person name="Onodera C.S."/>
            <person name="Deng J.M."/>
            <person name="Akiyama K."/>
            <person name="Ansari Y."/>
            <person name="Arakawa T."/>
            <person name="Banh J."/>
            <person name="Banno F."/>
            <person name="Bowser L."/>
            <person name="Brooks S.Y."/>
            <person name="Carninci P."/>
            <person name="Chao Q."/>
            <person name="Choy N."/>
            <person name="Enju A."/>
            <person name="Goldsmith A.D."/>
            <person name="Gurjal M."/>
            <person name="Hansen N.F."/>
            <person name="Hayashizaki Y."/>
            <person name="Johnson-Hopson C."/>
            <person name="Hsuan V.W."/>
            <person name="Iida K."/>
            <person name="Karnes M."/>
            <person name="Khan S."/>
            <person name="Koesema E."/>
            <person name="Ishida J."/>
            <person name="Jiang P.X."/>
            <person name="Jones T."/>
            <person name="Kawai J."/>
            <person name="Kamiya A."/>
            <person name="Meyers C."/>
            <person name="Nakajima M."/>
            <person name="Narusaka M."/>
            <person name="Seki M."/>
            <person name="Sakurai T."/>
            <person name="Satou M."/>
            <person name="Tamse R."/>
            <person name="Vaysberg M."/>
            <person name="Wallender E.K."/>
            <person name="Wong C."/>
            <person name="Yamamura Y."/>
            <person name="Yuan S."/>
            <person name="Shinozaki K."/>
            <person name="Davis R.W."/>
            <person name="Theologis A."/>
            <person name="Ecker J.R."/>
        </authorList>
    </citation>
    <scope>NUCLEOTIDE SEQUENCE [LARGE SCALE MRNA]</scope>
    <source>
        <strain>cv. Columbia</strain>
    </source>
</reference>
<reference key="7">
    <citation type="submission" date="2002-03" db="EMBL/GenBank/DDBJ databases">
        <title>Full-length cDNA from Arabidopsis thaliana.</title>
        <authorList>
            <person name="Brover V.V."/>
            <person name="Troukhan M.E."/>
            <person name="Alexandrov N.A."/>
            <person name="Lu Y.-P."/>
            <person name="Flavell R.B."/>
            <person name="Feldmann K.A."/>
        </authorList>
    </citation>
    <scope>NUCLEOTIDE SEQUENCE [LARGE SCALE MRNA]</scope>
</reference>
<reference key="8">
    <citation type="journal article" date="2004" name="Cell. Mol. Life Sci.">
        <title>Plant glutaredoxins: still mysterious reducing systems.</title>
        <authorList>
            <person name="Rouhier N."/>
            <person name="Gelhaye E."/>
            <person name="Jacquot J.-P."/>
        </authorList>
    </citation>
    <scope>GENE FAMILY</scope>
    <scope>NOMENCLATURE</scope>
</reference>
<reference key="9">
    <citation type="journal article" date="2006" name="J. Exp. Bot.">
        <title>Genome-wide analysis of plant glutaredoxin systems.</title>
        <authorList>
            <person name="Rouhier N."/>
            <person name="Couturier J."/>
            <person name="Jacquot J.-P."/>
        </authorList>
    </citation>
    <scope>GENE FAMILY</scope>
</reference>
<reference key="10">
    <citation type="journal article" date="2014" name="Mol. Plant">
        <title>Monothiol glutaredoxin-BolA interactions: redox control of Arabidopsis thaliana BolA2 and SufE1.</title>
        <authorList>
            <person name="Couturier J."/>
            <person name="Wu H.C."/>
            <person name="Dhalleine T."/>
            <person name="Pegeot H."/>
            <person name="Sudre D."/>
            <person name="Gualberto J.M."/>
            <person name="Jacquot J.P."/>
            <person name="Gaymard F."/>
            <person name="Vignols F."/>
            <person name="Rouhier N."/>
        </authorList>
    </citation>
    <scope>INTERACTION WITH SUFE1; BOLA1; BOLA2 AND BOLA4</scope>
    <scope>MUTAGENESIS OF CYS-219</scope>
</reference>
<reference key="11">
    <citation type="journal article" date="2014" name="Plant Signal. Behav.">
        <title>Putative roles of glutaredoxin-BolA holo-heterodimers in plants.</title>
        <authorList>
            <person name="Dhalleine T."/>
            <person name="Rouhier N."/>
            <person name="Couturier J."/>
        </authorList>
    </citation>
    <scope>FUNCTION</scope>
    <scope>INTERACTION WITH BOLA1</scope>
</reference>
<reference key="12">
    <citation type="journal article" date="2019" name="Plant Sci.">
        <title>Novel interactions of selenium binding protein family with the PICOT containing proteins AtGRXS14 and AtGRXS16 in Arabidopsis thaliana.</title>
        <authorList>
            <person name="Valassakis C."/>
            <person name="Dervisi I."/>
            <person name="Agalou A."/>
            <person name="Papandreou N."/>
            <person name="Kapetsis G."/>
            <person name="Podia V."/>
            <person name="Haralampidis K."/>
            <person name="Iconomidou V.A."/>
            <person name="Spaink H.P."/>
            <person name="Roussis A."/>
        </authorList>
    </citation>
    <scope>INTERACTION WITH SBP1</scope>
</reference>
<reference key="13">
    <citation type="journal article" date="2013" name="Proc. Natl. Acad. Sci. U.S.A.">
        <title>Structural insights into the N-terminal GIY-YIG endonuclease activity of Arabidopsis glutaredoxin AtGRXS16 in chloroplasts.</title>
        <authorList>
            <person name="Liu X."/>
            <person name="Liu S."/>
            <person name="Feng Y."/>
            <person name="Liu J.Z."/>
            <person name="Chen Y."/>
            <person name="Pham K."/>
            <person name="Deng H."/>
            <person name="Hirschi K.D."/>
            <person name="Wang X."/>
            <person name="Cheng N."/>
        </authorList>
    </citation>
    <scope>STRUCTURE BY NMR OF 63-170</scope>
    <scope>FUNCTION</scope>
    <scope>DOMAIN</scope>
    <scope>MUTAGENESIS OF TYR-90; PHE-101; SER-111; HIS-115; CYS-123; TRP-143 AND ASN-161</scope>
    <scope>SUBUNIT</scope>
    <scope>DISULFIDE BOND</scope>
    <scope>ACTIVITY REGULATION</scope>
    <scope>SUBCELLULAR LOCATION</scope>
</reference>
<evidence type="ECO:0000250" key="1">
    <source>
        <dbReference type="UniProtKB" id="P0AC69"/>
    </source>
</evidence>
<evidence type="ECO:0000255" key="2"/>
<evidence type="ECO:0000255" key="3">
    <source>
        <dbReference type="PROSITE-ProRule" id="PRU00686"/>
    </source>
</evidence>
<evidence type="ECO:0000269" key="4">
    <source>
    </source>
</evidence>
<evidence type="ECO:0000269" key="5">
    <source>
    </source>
</evidence>
<evidence type="ECO:0000269" key="6">
    <source>
    </source>
</evidence>
<evidence type="ECO:0000269" key="7">
    <source>
    </source>
</evidence>
<evidence type="ECO:0000303" key="8">
    <source>
    </source>
</evidence>
<evidence type="ECO:0000303" key="9">
    <source>
    </source>
</evidence>
<evidence type="ECO:0000303" key="10">
    <source>
    </source>
</evidence>
<evidence type="ECO:0000305" key="11"/>
<evidence type="ECO:0000312" key="12">
    <source>
        <dbReference type="Araport" id="AT2G38270"/>
    </source>
</evidence>
<evidence type="ECO:0000312" key="13">
    <source>
        <dbReference type="EMBL" id="AAC27175.1"/>
    </source>
</evidence>
<evidence type="ECO:0007829" key="14">
    <source>
        <dbReference type="PDB" id="2LWF"/>
    </source>
</evidence>
<organism>
    <name type="scientific">Arabidopsis thaliana</name>
    <name type="common">Mouse-ear cress</name>
    <dbReference type="NCBI Taxonomy" id="3702"/>
    <lineage>
        <taxon>Eukaryota</taxon>
        <taxon>Viridiplantae</taxon>
        <taxon>Streptophyta</taxon>
        <taxon>Embryophyta</taxon>
        <taxon>Tracheophyta</taxon>
        <taxon>Spermatophyta</taxon>
        <taxon>Magnoliopsida</taxon>
        <taxon>eudicotyledons</taxon>
        <taxon>Gunneridae</taxon>
        <taxon>Pentapetalae</taxon>
        <taxon>rosids</taxon>
        <taxon>malvids</taxon>
        <taxon>Brassicales</taxon>
        <taxon>Brassicaceae</taxon>
        <taxon>Camelineae</taxon>
        <taxon>Arabidopsis</taxon>
    </lineage>
</organism>
<gene>
    <name evidence="9" type="primary">GRXS16</name>
    <name evidence="8" type="synonym">CXIP2</name>
    <name evidence="12" type="ordered locus">At2g38270</name>
    <name evidence="13" type="ORF">F16M14.20</name>
</gene>
<name>GRS16_ARATH</name>
<keyword id="KW-0001">2Fe-2S</keyword>
<keyword id="KW-0002">3D-structure</keyword>
<keyword id="KW-0150">Chloroplast</keyword>
<keyword id="KW-1015">Disulfide bond</keyword>
<keyword id="KW-0378">Hydrolase</keyword>
<keyword id="KW-0408">Iron</keyword>
<keyword id="KW-0411">Iron-sulfur</keyword>
<keyword id="KW-0479">Metal-binding</keyword>
<keyword id="KW-0511">Multifunctional enzyme</keyword>
<keyword id="KW-0934">Plastid</keyword>
<keyword id="KW-0676">Redox-active center</keyword>
<keyword id="KW-1185">Reference proteome</keyword>
<keyword id="KW-0809">Transit peptide</keyword>
<feature type="transit peptide" description="Chloroplast" evidence="2">
    <location>
        <begin position="1"/>
        <end position="62"/>
    </location>
</feature>
<feature type="chain" id="PRO_0000268736" description="Bifunctional monothiol glutaredoxin-S16, chloroplastic">
    <location>
        <begin position="63"/>
        <end position="293"/>
    </location>
</feature>
<feature type="domain" description="Glutaredoxin" evidence="3">
    <location>
        <begin position="194"/>
        <end position="293"/>
    </location>
</feature>
<feature type="binding site" evidence="1">
    <location>
        <position position="211"/>
    </location>
    <ligand>
        <name>glutathione</name>
        <dbReference type="ChEBI" id="CHEBI:57925"/>
    </ligand>
</feature>
<feature type="binding site" evidence="1">
    <location>
        <position position="219"/>
    </location>
    <ligand>
        <name>[2Fe-2S] cluster</name>
        <dbReference type="ChEBI" id="CHEBI:190135"/>
        <note>ligand shared between dimeric partners</note>
    </ligand>
</feature>
<feature type="binding site" evidence="1">
    <location>
        <position position="251"/>
    </location>
    <ligand>
        <name>glutathione</name>
        <dbReference type="ChEBI" id="CHEBI:57925"/>
    </ligand>
</feature>
<feature type="binding site" evidence="1">
    <location>
        <position position="263"/>
    </location>
    <ligand>
        <name>glutathione</name>
        <dbReference type="ChEBI" id="CHEBI:57925"/>
    </ligand>
</feature>
<feature type="binding site" evidence="1">
    <location>
        <begin position="276"/>
        <end position="277"/>
    </location>
    <ligand>
        <name>glutathione</name>
        <dbReference type="ChEBI" id="CHEBI:57925"/>
    </ligand>
</feature>
<feature type="disulfide bond" evidence="4">
    <location>
        <begin position="123"/>
        <end position="219"/>
    </location>
</feature>
<feature type="mutagenesis site" description="Strongly reduced nuclease activity." evidence="4">
    <original>Y</original>
    <variation>F</variation>
    <location>
        <position position="90"/>
    </location>
</feature>
<feature type="mutagenesis site" description="Enhanced nuclease activity." evidence="4">
    <original>F</original>
    <variation>Y</variation>
    <location>
        <position position="101"/>
    </location>
</feature>
<feature type="mutagenesis site" description="Strongly reduced nuclease activity." evidence="4">
    <original>S</original>
    <variation>A</variation>
    <location>
        <position position="111"/>
    </location>
</feature>
<feature type="mutagenesis site" description="Slightly reduced nuclease activity." evidence="4">
    <original>S</original>
    <variation>R</variation>
    <location>
        <position position="111"/>
    </location>
</feature>
<feature type="mutagenesis site" description="Strongly reduced nuclease activity." evidence="4">
    <original>H</original>
    <variation>F</variation>
    <location>
        <position position="115"/>
    </location>
</feature>
<feature type="mutagenesis site" description="Increased glutaredoxin activity." evidence="4">
    <original>C</original>
    <variation>S</variation>
    <location>
        <position position="123"/>
    </location>
</feature>
<feature type="mutagenesis site" description="Slightly reduced nuclease activity." evidence="4">
    <original>W</original>
    <variation>A</variation>
    <variation>E</variation>
    <location>
        <position position="143"/>
    </location>
</feature>
<feature type="mutagenesis site" description="Slightly reduced nuclease activity." evidence="4">
    <original>N</original>
    <variation>L</variation>
    <location>
        <position position="161"/>
    </location>
</feature>
<feature type="mutagenesis site" description="Decreased interactions with BOLA proteins and loss of interaction with SUFE1." evidence="5">
    <original>C</original>
    <variation>S</variation>
    <location>
        <position position="219"/>
    </location>
</feature>
<feature type="sequence conflict" description="In Ref. 2; AAN60257." evidence="11" ref="2">
    <original>E</original>
    <variation>G</variation>
    <location>
        <position position="194"/>
    </location>
</feature>
<feature type="helix" evidence="14">
    <location>
        <begin position="69"/>
        <end position="71"/>
    </location>
</feature>
<feature type="strand" evidence="14">
    <location>
        <begin position="73"/>
        <end position="77"/>
    </location>
</feature>
<feature type="helix" evidence="14">
    <location>
        <begin position="80"/>
        <end position="82"/>
    </location>
</feature>
<feature type="strand" evidence="14">
    <location>
        <begin position="86"/>
        <end position="93"/>
    </location>
</feature>
<feature type="strand" evidence="14">
    <location>
        <begin position="99"/>
        <end position="106"/>
    </location>
</feature>
<feature type="helix" evidence="14">
    <location>
        <begin position="108"/>
        <end position="118"/>
    </location>
</feature>
<feature type="helix" evidence="14">
    <location>
        <begin position="120"/>
        <end position="122"/>
    </location>
</feature>
<feature type="strand" evidence="14">
    <location>
        <begin position="124"/>
        <end position="130"/>
    </location>
</feature>
<feature type="helix" evidence="14">
    <location>
        <begin position="136"/>
        <end position="153"/>
    </location>
</feature>
<feature type="turn" evidence="14">
    <location>
        <begin position="159"/>
        <end position="163"/>
    </location>
</feature>
<feature type="turn" evidence="14">
    <location>
        <begin position="167"/>
        <end position="169"/>
    </location>
</feature>